<dbReference type="EC" id="3.2.-.-" evidence="1"/>
<dbReference type="EMBL" id="AP009240">
    <property type="protein sequence ID" value="BAG76245.1"/>
    <property type="molecule type" value="Genomic_DNA"/>
</dbReference>
<dbReference type="RefSeq" id="WP_001207503.1">
    <property type="nucleotide sequence ID" value="NC_011415.1"/>
</dbReference>
<dbReference type="SMR" id="B6I163"/>
<dbReference type="GeneID" id="75204988"/>
<dbReference type="KEGG" id="ecy:ECSE_0721"/>
<dbReference type="HOGENOM" id="CLU_036838_2_0_6"/>
<dbReference type="Proteomes" id="UP000008199">
    <property type="component" value="Chromosome"/>
</dbReference>
<dbReference type="GO" id="GO:0005829">
    <property type="term" value="C:cytosol"/>
    <property type="evidence" value="ECO:0007669"/>
    <property type="project" value="TreeGrafter"/>
</dbReference>
<dbReference type="GO" id="GO:0008477">
    <property type="term" value="F:purine nucleosidase activity"/>
    <property type="evidence" value="ECO:0007669"/>
    <property type="project" value="TreeGrafter"/>
</dbReference>
<dbReference type="GO" id="GO:0045437">
    <property type="term" value="F:uridine nucleosidase activity"/>
    <property type="evidence" value="ECO:0007669"/>
    <property type="project" value="InterPro"/>
</dbReference>
<dbReference type="GO" id="GO:0015949">
    <property type="term" value="P:nucleobase-containing small molecule interconversion"/>
    <property type="evidence" value="ECO:0007669"/>
    <property type="project" value="InterPro"/>
</dbReference>
<dbReference type="GO" id="GO:0006152">
    <property type="term" value="P:purine nucleoside catabolic process"/>
    <property type="evidence" value="ECO:0007669"/>
    <property type="project" value="TreeGrafter"/>
</dbReference>
<dbReference type="GO" id="GO:0006206">
    <property type="term" value="P:pyrimidine nucleobase metabolic process"/>
    <property type="evidence" value="ECO:0007669"/>
    <property type="project" value="UniProtKB-UniRule"/>
</dbReference>
<dbReference type="CDD" id="cd02651">
    <property type="entry name" value="nuc_hydro_IU_UC_XIUA"/>
    <property type="match status" value="1"/>
</dbReference>
<dbReference type="FunFam" id="3.90.245.10:FF:000001">
    <property type="entry name" value="Pyrimidine-specific ribonucleoside hydrolase RihA"/>
    <property type="match status" value="1"/>
</dbReference>
<dbReference type="Gene3D" id="3.90.245.10">
    <property type="entry name" value="Ribonucleoside hydrolase-like"/>
    <property type="match status" value="1"/>
</dbReference>
<dbReference type="HAMAP" id="MF_01431">
    <property type="entry name" value="Pyrim_hydro_RihA"/>
    <property type="match status" value="1"/>
</dbReference>
<dbReference type="InterPro" id="IPR015910">
    <property type="entry name" value="I/U_nuclsd_hydro_CS"/>
</dbReference>
<dbReference type="InterPro" id="IPR001910">
    <property type="entry name" value="Inosine/uridine_hydrolase_dom"/>
</dbReference>
<dbReference type="InterPro" id="IPR023186">
    <property type="entry name" value="IUNH"/>
</dbReference>
<dbReference type="InterPro" id="IPR022975">
    <property type="entry name" value="Pyrim_hydro_RihA"/>
</dbReference>
<dbReference type="InterPro" id="IPR036452">
    <property type="entry name" value="Ribo_hydro-like"/>
</dbReference>
<dbReference type="NCBIfam" id="NF007761">
    <property type="entry name" value="PRK10443.1"/>
    <property type="match status" value="1"/>
</dbReference>
<dbReference type="PANTHER" id="PTHR12304">
    <property type="entry name" value="INOSINE-URIDINE PREFERRING NUCLEOSIDE HYDROLASE"/>
    <property type="match status" value="1"/>
</dbReference>
<dbReference type="PANTHER" id="PTHR12304:SF4">
    <property type="entry name" value="URIDINE NUCLEOSIDASE"/>
    <property type="match status" value="1"/>
</dbReference>
<dbReference type="Pfam" id="PF01156">
    <property type="entry name" value="IU_nuc_hydro"/>
    <property type="match status" value="1"/>
</dbReference>
<dbReference type="SUPFAM" id="SSF53590">
    <property type="entry name" value="Nucleoside hydrolase"/>
    <property type="match status" value="1"/>
</dbReference>
<dbReference type="PROSITE" id="PS01247">
    <property type="entry name" value="IUNH"/>
    <property type="match status" value="1"/>
</dbReference>
<name>RIHA_ECOSE</name>
<protein>
    <recommendedName>
        <fullName evidence="1">Pyrimidine-specific ribonucleoside hydrolase RihA</fullName>
        <ecNumber evidence="1">3.2.-.-</ecNumber>
    </recommendedName>
    <alternativeName>
        <fullName evidence="1">Cytidine/uridine-specific hydrolase</fullName>
    </alternativeName>
</protein>
<reference key="1">
    <citation type="journal article" date="2008" name="DNA Res.">
        <title>Complete genome sequence and comparative analysis of the wild-type commensal Escherichia coli strain SE11 isolated from a healthy adult.</title>
        <authorList>
            <person name="Oshima K."/>
            <person name="Toh H."/>
            <person name="Ogura Y."/>
            <person name="Sasamoto H."/>
            <person name="Morita H."/>
            <person name="Park S.-H."/>
            <person name="Ooka T."/>
            <person name="Iyoda S."/>
            <person name="Taylor T.D."/>
            <person name="Hayashi T."/>
            <person name="Itoh K."/>
            <person name="Hattori M."/>
        </authorList>
    </citation>
    <scope>NUCLEOTIDE SEQUENCE [LARGE SCALE GENOMIC DNA]</scope>
    <source>
        <strain>SE11</strain>
    </source>
</reference>
<accession>B6I163</accession>
<evidence type="ECO:0000255" key="1">
    <source>
        <dbReference type="HAMAP-Rule" id="MF_01431"/>
    </source>
</evidence>
<comment type="function">
    <text evidence="1">Hydrolyzes with equal efficiency cytidine or uridine to ribose and cytosine or uracil, respectively.</text>
</comment>
<comment type="similarity">
    <text evidence="1">Belongs to the IUNH family. RihA subfamily.</text>
</comment>
<proteinExistence type="inferred from homology"/>
<gene>
    <name evidence="1" type="primary">rihA</name>
    <name type="ordered locus">ECSE_0721</name>
</gene>
<feature type="chain" id="PRO_1000145794" description="Pyrimidine-specific ribonucleoside hydrolase RihA">
    <location>
        <begin position="1"/>
        <end position="311"/>
    </location>
</feature>
<feature type="active site" evidence="1">
    <location>
        <position position="240"/>
    </location>
</feature>
<sequence>MALPILLDCDPGHDDAIAIVLALASPELDVKAITSSAGNQTPEKTLRNVLRMLTLLNRTDIPVAGGAVKPLMRELIIADNVHGESGLDGPALPEPAFAPQNCTAVELMAKTLRESAEPVTIVSTGPQTNVALLLNSHPELHSKIARIVIMGGAMGLGNWTPAAEFNIYVDPEAAEIVFQSGIPVVMAGLDVTHKAQIHVEDTERFRAIGNPVSTIVAELLDFFLEYHKDEKWGFVGAPLHDPCTIAWLLKPELFTTVERWVGVETQGKYTQGMTVVDYYYLTGNKPNATVMVDVDRQGFVDLLADRLKFYA</sequence>
<keyword id="KW-0326">Glycosidase</keyword>
<keyword id="KW-0378">Hydrolase</keyword>
<organism>
    <name type="scientific">Escherichia coli (strain SE11)</name>
    <dbReference type="NCBI Taxonomy" id="409438"/>
    <lineage>
        <taxon>Bacteria</taxon>
        <taxon>Pseudomonadati</taxon>
        <taxon>Pseudomonadota</taxon>
        <taxon>Gammaproteobacteria</taxon>
        <taxon>Enterobacterales</taxon>
        <taxon>Enterobacteriaceae</taxon>
        <taxon>Escherichia</taxon>
    </lineage>
</organism>